<evidence type="ECO:0000250" key="1">
    <source>
        <dbReference type="UniProtKB" id="Q60756"/>
    </source>
</evidence>
<evidence type="ECO:0000255" key="2">
    <source>
        <dbReference type="PROSITE-ProRule" id="PRU00981"/>
    </source>
</evidence>
<evidence type="ECO:0000256" key="3">
    <source>
        <dbReference type="SAM" id="MobiDB-lite"/>
    </source>
</evidence>
<evidence type="ECO:0000303" key="4">
    <source>
    </source>
</evidence>
<evidence type="ECO:0000305" key="5"/>
<evidence type="ECO:0000312" key="6">
    <source>
        <dbReference type="HGNC" id="HGNC:11627"/>
    </source>
</evidence>
<accession>Q12870</accession>
<accession>Q9NQQ1</accession>
<proteinExistence type="evidence at protein level"/>
<keyword id="KW-0010">Activator</keyword>
<keyword id="KW-0217">Developmental protein</keyword>
<keyword id="KW-0221">Differentiation</keyword>
<keyword id="KW-0238">DNA-binding</keyword>
<keyword id="KW-0539">Nucleus</keyword>
<keyword id="KW-1267">Proteomics identification</keyword>
<keyword id="KW-1185">Reference proteome</keyword>
<keyword id="KW-0804">Transcription</keyword>
<keyword id="KW-0805">Transcription regulation</keyword>
<sequence>MAFALLRPVGAHVLYPDVRLLSEDEENRSESDASDQSFGCCEGPEAARRGPGPGGGRRAGGGGGAGPVVVVRQRQAANARERDRTQSVNTAFTALRTLIPTEPVDRKLSKIETVRLASSYIAHLANVLLLGDSADDGQPCFRAAGSAKGAVPAAADGGRQPRSICTFCLSNQRKGGGRRDLGGSCLKVRGVAPLRGPRR</sequence>
<comment type="function">
    <text evidence="1">Early transcription factor that plays a key role in somitogenesis, paraxial mesoderm development and regulation of stem cell pluripotency. Essential for the mesenchymal to epithelial transition associated with somite formation. Required for somite morphogenesis, thereby regulating patterning of the axial skeleton and skeletal muscles. Required for proper localization of somite epithelium markers during the mesenchymal to epithelial transition. Also plays a key role in regulation of stem cell pluripotency. Promotes pluripotency exit of embryonic stem cells (ESCs) by priming ESCs for differentiation. Acts as a key regulator of self-renewal of hematopoietic stem cells (HSCs) by mediating HSCs quiescence and long-term self-renewal. Together with MEOX2, regulates transcription in heart endothelial cells to regulate fatty acid transport across heart endothelial cells. Acts by forming a heterodimer with another helix-loop-helix (bHLH) protein, such as TCF3/E12, that binds DNA on E-box motifs (5'-CANNTG-3') and activates transcription of target genes.</text>
</comment>
<comment type="subunit">
    <text evidence="1">Heterodimer; efficient DNA binding requires dimerization with another bHLH protein, such as TCF3/E12. Interacts with MEOX2.</text>
</comment>
<comment type="subcellular location">
    <subcellularLocation>
        <location evidence="1 2">Nucleus</location>
    </subcellularLocation>
</comment>
<name>TCF15_HUMAN</name>
<organism>
    <name type="scientific">Homo sapiens</name>
    <name type="common">Human</name>
    <dbReference type="NCBI Taxonomy" id="9606"/>
    <lineage>
        <taxon>Eukaryota</taxon>
        <taxon>Metazoa</taxon>
        <taxon>Chordata</taxon>
        <taxon>Craniata</taxon>
        <taxon>Vertebrata</taxon>
        <taxon>Euteleostomi</taxon>
        <taxon>Mammalia</taxon>
        <taxon>Eutheria</taxon>
        <taxon>Euarchontoglires</taxon>
        <taxon>Primates</taxon>
        <taxon>Haplorrhini</taxon>
        <taxon>Catarrhini</taxon>
        <taxon>Hominidae</taxon>
        <taxon>Homo</taxon>
    </lineage>
</organism>
<feature type="chain" id="PRO_0000127460" description="Transcription factor 15">
    <location>
        <begin position="1"/>
        <end position="199"/>
    </location>
</feature>
<feature type="domain" description="bHLH" evidence="2">
    <location>
        <begin position="72"/>
        <end position="124"/>
    </location>
</feature>
<feature type="region of interest" description="Disordered" evidence="3">
    <location>
        <begin position="25"/>
        <end position="67"/>
    </location>
</feature>
<feature type="compositionally biased region" description="Gly residues" evidence="3">
    <location>
        <begin position="51"/>
        <end position="66"/>
    </location>
</feature>
<feature type="sequence conflict" description="In Ref. 1; AAA19969." evidence="5" ref="1">
    <original>V</original>
    <variation>L</variation>
    <location>
        <position position="114"/>
    </location>
</feature>
<feature type="sequence conflict" description="In Ref. 1; AAA19969." evidence="5" ref="1">
    <original>ADGG</original>
    <variation>PTR</variation>
    <location>
        <begin position="155"/>
        <end position="158"/>
    </location>
</feature>
<gene>
    <name evidence="6" type="primary">TCF15</name>
    <name evidence="6" type="synonym">BHLHA40</name>
    <name evidence="4" type="synonym">BHLHEC2</name>
</gene>
<protein>
    <recommendedName>
        <fullName evidence="1">Transcription factor 15</fullName>
        <shortName evidence="1">TCF-15</shortName>
    </recommendedName>
    <alternativeName>
        <fullName evidence="5">Class A basic helix-loop-helix protein 40</fullName>
        <shortName evidence="6">bHLHa40</shortName>
    </alternativeName>
    <alternativeName>
        <fullName evidence="1">Paraxis</fullName>
    </alternativeName>
    <alternativeName>
        <fullName evidence="4">Protein bHLH-EC2</fullName>
    </alternativeName>
</protein>
<dbReference type="EMBL" id="U08336">
    <property type="protein sequence ID" value="AAA19969.1"/>
    <property type="molecule type" value="mRNA"/>
</dbReference>
<dbReference type="EMBL" id="AL133231">
    <property type="status" value="NOT_ANNOTATED_CDS"/>
    <property type="molecule type" value="Genomic_DNA"/>
</dbReference>
<dbReference type="CCDS" id="CCDS33432.1"/>
<dbReference type="PIR" id="A57717">
    <property type="entry name" value="A57717"/>
</dbReference>
<dbReference type="RefSeq" id="NP_004600.2">
    <property type="nucleotide sequence ID" value="NM_004609.3"/>
</dbReference>
<dbReference type="SMR" id="Q12870"/>
<dbReference type="BioGRID" id="112799">
    <property type="interactions" value="23"/>
</dbReference>
<dbReference type="FunCoup" id="Q12870">
    <property type="interactions" value="684"/>
</dbReference>
<dbReference type="IntAct" id="Q12870">
    <property type="interactions" value="11"/>
</dbReference>
<dbReference type="STRING" id="9606.ENSP00000246080"/>
<dbReference type="GlyGen" id="Q12870">
    <property type="glycosylation" value="1 site"/>
</dbReference>
<dbReference type="iPTMnet" id="Q12870"/>
<dbReference type="PhosphoSitePlus" id="Q12870"/>
<dbReference type="BioMuta" id="TCF15"/>
<dbReference type="DMDM" id="116242817"/>
<dbReference type="MassIVE" id="Q12870"/>
<dbReference type="PaxDb" id="9606-ENSP00000246080"/>
<dbReference type="PeptideAtlas" id="Q12870"/>
<dbReference type="Antibodypedia" id="6289">
    <property type="antibodies" value="103 antibodies from 20 providers"/>
</dbReference>
<dbReference type="DNASU" id="6939"/>
<dbReference type="Ensembl" id="ENST00000246080.4">
    <property type="protein sequence ID" value="ENSP00000246080.3"/>
    <property type="gene ID" value="ENSG00000125878.7"/>
</dbReference>
<dbReference type="GeneID" id="6939"/>
<dbReference type="KEGG" id="hsa:6939"/>
<dbReference type="MANE-Select" id="ENST00000246080.4">
    <property type="protein sequence ID" value="ENSP00000246080.3"/>
    <property type="RefSeq nucleotide sequence ID" value="NM_004609.4"/>
    <property type="RefSeq protein sequence ID" value="NP_004600.3"/>
</dbReference>
<dbReference type="UCSC" id="uc002wdz.4">
    <property type="organism name" value="human"/>
</dbReference>
<dbReference type="AGR" id="HGNC:11627"/>
<dbReference type="CTD" id="6939"/>
<dbReference type="DisGeNET" id="6939"/>
<dbReference type="GeneCards" id="TCF15"/>
<dbReference type="HGNC" id="HGNC:11627">
    <property type="gene designation" value="TCF15"/>
</dbReference>
<dbReference type="HPA" id="ENSG00000125878">
    <property type="expression patterns" value="Tissue enhanced (heart muscle, skeletal muscle, tongue)"/>
</dbReference>
<dbReference type="MIM" id="601010">
    <property type="type" value="gene"/>
</dbReference>
<dbReference type="neXtProt" id="NX_Q12870"/>
<dbReference type="OpenTargets" id="ENSG00000125878"/>
<dbReference type="PharmGKB" id="PA36382"/>
<dbReference type="VEuPathDB" id="HostDB:ENSG00000125878"/>
<dbReference type="eggNOG" id="KOG4029">
    <property type="taxonomic scope" value="Eukaryota"/>
</dbReference>
<dbReference type="GeneTree" id="ENSGT00940000161320"/>
<dbReference type="InParanoid" id="Q12870"/>
<dbReference type="OMA" id="HRTQNVN"/>
<dbReference type="OrthoDB" id="6106870at2759"/>
<dbReference type="PAN-GO" id="Q12870">
    <property type="GO annotations" value="4 GO annotations based on evolutionary models"/>
</dbReference>
<dbReference type="PhylomeDB" id="Q12870"/>
<dbReference type="TreeFam" id="TF315153"/>
<dbReference type="PathwayCommons" id="Q12870"/>
<dbReference type="SignaLink" id="Q12870"/>
<dbReference type="BioGRID-ORCS" id="6939">
    <property type="hits" value="12 hits in 1172 CRISPR screens"/>
</dbReference>
<dbReference type="ChiTaRS" id="TCF15">
    <property type="organism name" value="human"/>
</dbReference>
<dbReference type="GenomeRNAi" id="6939"/>
<dbReference type="Pharos" id="Q12870">
    <property type="development level" value="Tbio"/>
</dbReference>
<dbReference type="PRO" id="PR:Q12870"/>
<dbReference type="Proteomes" id="UP000005640">
    <property type="component" value="Chromosome 20"/>
</dbReference>
<dbReference type="RNAct" id="Q12870">
    <property type="molecule type" value="protein"/>
</dbReference>
<dbReference type="Bgee" id="ENSG00000125878">
    <property type="expression patterns" value="Expressed in heart right ventricle and 138 other cell types or tissues"/>
</dbReference>
<dbReference type="GO" id="GO:0000785">
    <property type="term" value="C:chromatin"/>
    <property type="evidence" value="ECO:0000247"/>
    <property type="project" value="NTNU_SB"/>
</dbReference>
<dbReference type="GO" id="GO:0005634">
    <property type="term" value="C:nucleus"/>
    <property type="evidence" value="ECO:0000250"/>
    <property type="project" value="UniProtKB"/>
</dbReference>
<dbReference type="GO" id="GO:0090575">
    <property type="term" value="C:RNA polymerase II transcription regulator complex"/>
    <property type="evidence" value="ECO:0007669"/>
    <property type="project" value="Ensembl"/>
</dbReference>
<dbReference type="GO" id="GO:0043425">
    <property type="term" value="F:bHLH transcription factor binding"/>
    <property type="evidence" value="ECO:0007669"/>
    <property type="project" value="Ensembl"/>
</dbReference>
<dbReference type="GO" id="GO:0001228">
    <property type="term" value="F:DNA-binding transcription activator activity, RNA polymerase II-specific"/>
    <property type="evidence" value="ECO:0007669"/>
    <property type="project" value="Ensembl"/>
</dbReference>
<dbReference type="GO" id="GO:0003700">
    <property type="term" value="F:DNA-binding transcription factor activity"/>
    <property type="evidence" value="ECO:0000304"/>
    <property type="project" value="ProtInc"/>
</dbReference>
<dbReference type="GO" id="GO:0000981">
    <property type="term" value="F:DNA-binding transcription factor activity, RNA polymerase II-specific"/>
    <property type="evidence" value="ECO:0000250"/>
    <property type="project" value="UniProtKB"/>
</dbReference>
<dbReference type="GO" id="GO:0070888">
    <property type="term" value="F:E-box binding"/>
    <property type="evidence" value="ECO:0000250"/>
    <property type="project" value="UniProtKB"/>
</dbReference>
<dbReference type="GO" id="GO:0046983">
    <property type="term" value="F:protein dimerization activity"/>
    <property type="evidence" value="ECO:0007669"/>
    <property type="project" value="InterPro"/>
</dbReference>
<dbReference type="GO" id="GO:0000977">
    <property type="term" value="F:RNA polymerase II transcription regulatory region sequence-specific DNA binding"/>
    <property type="evidence" value="ECO:0000318"/>
    <property type="project" value="GO_Central"/>
</dbReference>
<dbReference type="GO" id="GO:0032502">
    <property type="term" value="P:developmental process"/>
    <property type="evidence" value="ECO:0000318"/>
    <property type="project" value="GO_Central"/>
</dbReference>
<dbReference type="GO" id="GO:0043583">
    <property type="term" value="P:ear development"/>
    <property type="evidence" value="ECO:0007669"/>
    <property type="project" value="Ensembl"/>
</dbReference>
<dbReference type="GO" id="GO:0045198">
    <property type="term" value="P:establishment of epithelial cell apical/basal polarity"/>
    <property type="evidence" value="ECO:0007669"/>
    <property type="project" value="Ensembl"/>
</dbReference>
<dbReference type="GO" id="GO:0060231">
    <property type="term" value="P:mesenchymal to epithelial transition"/>
    <property type="evidence" value="ECO:0007669"/>
    <property type="project" value="Ensembl"/>
</dbReference>
<dbReference type="GO" id="GO:0007498">
    <property type="term" value="P:mesoderm development"/>
    <property type="evidence" value="ECO:0000304"/>
    <property type="project" value="ProtInc"/>
</dbReference>
<dbReference type="GO" id="GO:0048644">
    <property type="term" value="P:muscle organ morphogenesis"/>
    <property type="evidence" value="ECO:0007669"/>
    <property type="project" value="Ensembl"/>
</dbReference>
<dbReference type="GO" id="GO:1902037">
    <property type="term" value="P:negative regulation of hematopoietic stem cell differentiation"/>
    <property type="evidence" value="ECO:0000250"/>
    <property type="project" value="UniProtKB"/>
</dbReference>
<dbReference type="GO" id="GO:0050884">
    <property type="term" value="P:neuromuscular process controlling posture"/>
    <property type="evidence" value="ECO:0007669"/>
    <property type="project" value="Ensembl"/>
</dbReference>
<dbReference type="GO" id="GO:0048339">
    <property type="term" value="P:paraxial mesoderm development"/>
    <property type="evidence" value="ECO:0007669"/>
    <property type="project" value="Ensembl"/>
</dbReference>
<dbReference type="GO" id="GO:2000738">
    <property type="term" value="P:positive regulation of stem cell differentiation"/>
    <property type="evidence" value="ECO:0000250"/>
    <property type="project" value="UniProtKB"/>
</dbReference>
<dbReference type="GO" id="GO:0045944">
    <property type="term" value="P:positive regulation of transcription by RNA polymerase II"/>
    <property type="evidence" value="ECO:0000250"/>
    <property type="project" value="UniProtKB"/>
</dbReference>
<dbReference type="GO" id="GO:0036342">
    <property type="term" value="P:post-anal tail morphogenesis"/>
    <property type="evidence" value="ECO:0007669"/>
    <property type="project" value="Ensembl"/>
</dbReference>
<dbReference type="GO" id="GO:1903053">
    <property type="term" value="P:regulation of extracellular matrix organization"/>
    <property type="evidence" value="ECO:0007669"/>
    <property type="project" value="Ensembl"/>
</dbReference>
<dbReference type="GO" id="GO:0006357">
    <property type="term" value="P:regulation of transcription by RNA polymerase II"/>
    <property type="evidence" value="ECO:0000318"/>
    <property type="project" value="GO_Central"/>
</dbReference>
<dbReference type="GO" id="GO:0003016">
    <property type="term" value="P:respiratory system process"/>
    <property type="evidence" value="ECO:0007669"/>
    <property type="project" value="Ensembl"/>
</dbReference>
<dbReference type="GO" id="GO:0048705">
    <property type="term" value="P:skeletal system morphogenesis"/>
    <property type="evidence" value="ECO:0007669"/>
    <property type="project" value="Ensembl"/>
</dbReference>
<dbReference type="GO" id="GO:0001756">
    <property type="term" value="P:somitogenesis"/>
    <property type="evidence" value="ECO:0007669"/>
    <property type="project" value="Ensembl"/>
</dbReference>
<dbReference type="GO" id="GO:0019827">
    <property type="term" value="P:stem cell population maintenance"/>
    <property type="evidence" value="ECO:0000250"/>
    <property type="project" value="UniProtKB"/>
</dbReference>
<dbReference type="CDD" id="cd11470">
    <property type="entry name" value="bHLH_TS_TCF15_paraxis"/>
    <property type="match status" value="1"/>
</dbReference>
<dbReference type="FunFam" id="4.10.280.10:FF:000010">
    <property type="entry name" value="Scleraxis bHLH transcription factor"/>
    <property type="match status" value="1"/>
</dbReference>
<dbReference type="Gene3D" id="4.10.280.10">
    <property type="entry name" value="Helix-loop-helix DNA-binding domain"/>
    <property type="match status" value="1"/>
</dbReference>
<dbReference type="InterPro" id="IPR011598">
    <property type="entry name" value="bHLH_dom"/>
</dbReference>
<dbReference type="InterPro" id="IPR050283">
    <property type="entry name" value="E-box_TF_Regulators"/>
</dbReference>
<dbReference type="InterPro" id="IPR036638">
    <property type="entry name" value="HLH_DNA-bd_sf"/>
</dbReference>
<dbReference type="PANTHER" id="PTHR23349">
    <property type="entry name" value="BASIC HELIX-LOOP-HELIX TRANSCRIPTION FACTOR, TWIST"/>
    <property type="match status" value="1"/>
</dbReference>
<dbReference type="PANTHER" id="PTHR23349:SF4">
    <property type="entry name" value="TRANSCRIPTION FACTOR 15"/>
    <property type="match status" value="1"/>
</dbReference>
<dbReference type="Pfam" id="PF00010">
    <property type="entry name" value="HLH"/>
    <property type="match status" value="1"/>
</dbReference>
<dbReference type="SMART" id="SM00353">
    <property type="entry name" value="HLH"/>
    <property type="match status" value="1"/>
</dbReference>
<dbReference type="SUPFAM" id="SSF47459">
    <property type="entry name" value="HLH, helix-loop-helix DNA-binding domain"/>
    <property type="match status" value="1"/>
</dbReference>
<dbReference type="PROSITE" id="PS50888">
    <property type="entry name" value="BHLH"/>
    <property type="match status" value="1"/>
</dbReference>
<reference key="1">
    <citation type="journal article" date="1994" name="Proc. Natl. Acad. Sci. U.S.A.">
        <title>Cloning and characterization of a basic helix-loop-helix protein expressed in early mesoderm and the developing somites.</title>
        <authorList>
            <person name="Quertermous E.E."/>
            <person name="Hidai H."/>
            <person name="Blanar M.A."/>
            <person name="Quertermous T."/>
        </authorList>
    </citation>
    <scope>NUCLEOTIDE SEQUENCE [MRNA]</scope>
    <source>
        <tissue>Umbilical vein</tissue>
    </source>
</reference>
<reference key="2">
    <citation type="journal article" date="2001" name="Nature">
        <title>The DNA sequence and comparative analysis of human chromosome 20.</title>
        <authorList>
            <person name="Deloukas P."/>
            <person name="Matthews L.H."/>
            <person name="Ashurst J.L."/>
            <person name="Burton J."/>
            <person name="Gilbert J.G.R."/>
            <person name="Jones M."/>
            <person name="Stavrides G."/>
            <person name="Almeida J.P."/>
            <person name="Babbage A.K."/>
            <person name="Bagguley C.L."/>
            <person name="Bailey J."/>
            <person name="Barlow K.F."/>
            <person name="Bates K.N."/>
            <person name="Beard L.M."/>
            <person name="Beare D.M."/>
            <person name="Beasley O.P."/>
            <person name="Bird C.P."/>
            <person name="Blakey S.E."/>
            <person name="Bridgeman A.M."/>
            <person name="Brown A.J."/>
            <person name="Buck D."/>
            <person name="Burrill W.D."/>
            <person name="Butler A.P."/>
            <person name="Carder C."/>
            <person name="Carter N.P."/>
            <person name="Chapman J.C."/>
            <person name="Clamp M."/>
            <person name="Clark G."/>
            <person name="Clark L.N."/>
            <person name="Clark S.Y."/>
            <person name="Clee C.M."/>
            <person name="Clegg S."/>
            <person name="Cobley V.E."/>
            <person name="Collier R.E."/>
            <person name="Connor R.E."/>
            <person name="Corby N.R."/>
            <person name="Coulson A."/>
            <person name="Coville G.J."/>
            <person name="Deadman R."/>
            <person name="Dhami P.D."/>
            <person name="Dunn M."/>
            <person name="Ellington A.G."/>
            <person name="Frankland J.A."/>
            <person name="Fraser A."/>
            <person name="French L."/>
            <person name="Garner P."/>
            <person name="Grafham D.V."/>
            <person name="Griffiths C."/>
            <person name="Griffiths M.N.D."/>
            <person name="Gwilliam R."/>
            <person name="Hall R.E."/>
            <person name="Hammond S."/>
            <person name="Harley J.L."/>
            <person name="Heath P.D."/>
            <person name="Ho S."/>
            <person name="Holden J.L."/>
            <person name="Howden P.J."/>
            <person name="Huckle E."/>
            <person name="Hunt A.R."/>
            <person name="Hunt S.E."/>
            <person name="Jekosch K."/>
            <person name="Johnson C.M."/>
            <person name="Johnson D."/>
            <person name="Kay M.P."/>
            <person name="Kimberley A.M."/>
            <person name="King A."/>
            <person name="Knights A."/>
            <person name="Laird G.K."/>
            <person name="Lawlor S."/>
            <person name="Lehvaeslaiho M.H."/>
            <person name="Leversha M.A."/>
            <person name="Lloyd C."/>
            <person name="Lloyd D.M."/>
            <person name="Lovell J.D."/>
            <person name="Marsh V.L."/>
            <person name="Martin S.L."/>
            <person name="McConnachie L.J."/>
            <person name="McLay K."/>
            <person name="McMurray A.A."/>
            <person name="Milne S.A."/>
            <person name="Mistry D."/>
            <person name="Moore M.J.F."/>
            <person name="Mullikin J.C."/>
            <person name="Nickerson T."/>
            <person name="Oliver K."/>
            <person name="Parker A."/>
            <person name="Patel R."/>
            <person name="Pearce T.A.V."/>
            <person name="Peck A.I."/>
            <person name="Phillimore B.J.C.T."/>
            <person name="Prathalingam S.R."/>
            <person name="Plumb R.W."/>
            <person name="Ramsay H."/>
            <person name="Rice C.M."/>
            <person name="Ross M.T."/>
            <person name="Scott C.E."/>
            <person name="Sehra H.K."/>
            <person name="Shownkeen R."/>
            <person name="Sims S."/>
            <person name="Skuce C.D."/>
            <person name="Smith M.L."/>
            <person name="Soderlund C."/>
            <person name="Steward C.A."/>
            <person name="Sulston J.E."/>
            <person name="Swann R.M."/>
            <person name="Sycamore N."/>
            <person name="Taylor R."/>
            <person name="Tee L."/>
            <person name="Thomas D.W."/>
            <person name="Thorpe A."/>
            <person name="Tracey A."/>
            <person name="Tromans A.C."/>
            <person name="Vaudin M."/>
            <person name="Wall M."/>
            <person name="Wallis J.M."/>
            <person name="Whitehead S.L."/>
            <person name="Whittaker P."/>
            <person name="Willey D.L."/>
            <person name="Williams L."/>
            <person name="Williams S.A."/>
            <person name="Wilming L."/>
            <person name="Wray P.W."/>
            <person name="Hubbard T."/>
            <person name="Durbin R.M."/>
            <person name="Bentley D.R."/>
            <person name="Beck S."/>
            <person name="Rogers J."/>
        </authorList>
    </citation>
    <scope>NUCLEOTIDE SEQUENCE [LARGE SCALE GENOMIC DNA]</scope>
</reference>